<keyword id="KW-0067">ATP-binding</keyword>
<keyword id="KW-0963">Cytoplasm</keyword>
<keyword id="KW-0227">DNA damage</keyword>
<keyword id="KW-0234">DNA repair</keyword>
<keyword id="KW-0235">DNA replication</keyword>
<keyword id="KW-0238">DNA-binding</keyword>
<keyword id="KW-0547">Nucleotide-binding</keyword>
<keyword id="KW-1185">Reference proteome</keyword>
<keyword id="KW-0742">SOS response</keyword>
<name>RECF_MYCTO</name>
<comment type="function">
    <text evidence="1">The RecF protein is involved in DNA metabolism; it is required for DNA replication and normal SOS inducibility. RecF binds preferentially to single-stranded, linear DNA. It also seems to bind ATP (By similarity).</text>
</comment>
<comment type="subcellular location">
    <subcellularLocation>
        <location evidence="1">Cytoplasm</location>
    </subcellularLocation>
</comment>
<comment type="similarity">
    <text evidence="3">Belongs to the RecF family.</text>
</comment>
<evidence type="ECO:0000250" key="1"/>
<evidence type="ECO:0000255" key="2"/>
<evidence type="ECO:0000305" key="3"/>
<accession>P9WHI8</accession>
<accession>L0T293</accession>
<accession>P77896</accession>
<accession>Q59586</accession>
<organism>
    <name type="scientific">Mycobacterium tuberculosis (strain CDC 1551 / Oshkosh)</name>
    <dbReference type="NCBI Taxonomy" id="83331"/>
    <lineage>
        <taxon>Bacteria</taxon>
        <taxon>Bacillati</taxon>
        <taxon>Actinomycetota</taxon>
        <taxon>Actinomycetes</taxon>
        <taxon>Mycobacteriales</taxon>
        <taxon>Mycobacteriaceae</taxon>
        <taxon>Mycobacterium</taxon>
        <taxon>Mycobacterium tuberculosis complex</taxon>
    </lineage>
</organism>
<reference key="1">
    <citation type="journal article" date="2002" name="J. Bacteriol.">
        <title>Whole-genome comparison of Mycobacterium tuberculosis clinical and laboratory strains.</title>
        <authorList>
            <person name="Fleischmann R.D."/>
            <person name="Alland D."/>
            <person name="Eisen J.A."/>
            <person name="Carpenter L."/>
            <person name="White O."/>
            <person name="Peterson J.D."/>
            <person name="DeBoy R.T."/>
            <person name="Dodson R.J."/>
            <person name="Gwinn M.L."/>
            <person name="Haft D.H."/>
            <person name="Hickey E.K."/>
            <person name="Kolonay J.F."/>
            <person name="Nelson W.C."/>
            <person name="Umayam L.A."/>
            <person name="Ermolaeva M.D."/>
            <person name="Salzberg S.L."/>
            <person name="Delcher A."/>
            <person name="Utterback T.R."/>
            <person name="Weidman J.F."/>
            <person name="Khouri H.M."/>
            <person name="Gill J."/>
            <person name="Mikula A."/>
            <person name="Bishai W."/>
            <person name="Jacobs W.R. Jr."/>
            <person name="Venter J.C."/>
            <person name="Fraser C.M."/>
        </authorList>
    </citation>
    <scope>NUCLEOTIDE SEQUENCE [LARGE SCALE GENOMIC DNA]</scope>
    <source>
        <strain>CDC 1551 / Oshkosh</strain>
    </source>
</reference>
<feature type="chain" id="PRO_0000428179" description="DNA replication and repair protein RecF">
    <location>
        <begin position="1"/>
        <end position="385"/>
    </location>
</feature>
<feature type="binding site" evidence="2">
    <location>
        <begin position="30"/>
        <end position="37"/>
    </location>
    <ligand>
        <name>ATP</name>
        <dbReference type="ChEBI" id="CHEBI:30616"/>
    </ligand>
</feature>
<sequence length="385" mass="42200">MYVRHLGLRDFRSWACVDLELHPGRTVFVGPNGYGKTNLIEALWYSTTLGSHRVSADLPLIRVGTDRAVISTIVVNDGRECAVDLEIATGRVNKARLNRSSVRSTRDVVGVLRAVLFAPEDLGLVRGDPADRRRYLDDLAIVRRPAIAAVRAEYERVLRQRTALLKSVPGARYRGDRGVFDTLEVWDSRLAEHGAELVAARIDLVNQLAPEVKKAYQLLAPESRSASIGYRASMDVTGPSEQSDTDRQLLAARLLAALAARRDAELERGVCLVGPHRDDLILRLGDQPAKGFASHGEAWSLAVALRLAAYQLLRVDGGEPVLLLDDVFAELDVMRRRALATAAESAEQVLVTAAVLEDIPAGWDARRVHIDVRADDTGSMSVVLP</sequence>
<gene>
    <name type="primary">recF</name>
    <name type="ordered locus">MT0003</name>
</gene>
<protein>
    <recommendedName>
        <fullName>DNA replication and repair protein RecF</fullName>
    </recommendedName>
</protein>
<dbReference type="EMBL" id="AE000516">
    <property type="protein sequence ID" value="AAK44226.1"/>
    <property type="molecule type" value="Genomic_DNA"/>
</dbReference>
<dbReference type="PIR" id="S70984">
    <property type="entry name" value="S70984"/>
</dbReference>
<dbReference type="RefSeq" id="WP_003899768.1">
    <property type="nucleotide sequence ID" value="NZ_KK341227.1"/>
</dbReference>
<dbReference type="SMR" id="P9WHI8"/>
<dbReference type="KEGG" id="mtc:MT0003"/>
<dbReference type="PATRIC" id="fig|83331.31.peg.3"/>
<dbReference type="HOGENOM" id="CLU_040267_1_1_11"/>
<dbReference type="Proteomes" id="UP000001020">
    <property type="component" value="Chromosome"/>
</dbReference>
<dbReference type="GO" id="GO:0005737">
    <property type="term" value="C:cytoplasm"/>
    <property type="evidence" value="ECO:0007669"/>
    <property type="project" value="UniProtKB-SubCell"/>
</dbReference>
<dbReference type="GO" id="GO:0005524">
    <property type="term" value="F:ATP binding"/>
    <property type="evidence" value="ECO:0007669"/>
    <property type="project" value="UniProtKB-UniRule"/>
</dbReference>
<dbReference type="GO" id="GO:0003697">
    <property type="term" value="F:single-stranded DNA binding"/>
    <property type="evidence" value="ECO:0007669"/>
    <property type="project" value="UniProtKB-UniRule"/>
</dbReference>
<dbReference type="GO" id="GO:0006260">
    <property type="term" value="P:DNA replication"/>
    <property type="evidence" value="ECO:0007669"/>
    <property type="project" value="UniProtKB-UniRule"/>
</dbReference>
<dbReference type="GO" id="GO:0000731">
    <property type="term" value="P:DNA synthesis involved in DNA repair"/>
    <property type="evidence" value="ECO:0007669"/>
    <property type="project" value="TreeGrafter"/>
</dbReference>
<dbReference type="GO" id="GO:0006302">
    <property type="term" value="P:double-strand break repair"/>
    <property type="evidence" value="ECO:0007669"/>
    <property type="project" value="TreeGrafter"/>
</dbReference>
<dbReference type="GO" id="GO:0009432">
    <property type="term" value="P:SOS response"/>
    <property type="evidence" value="ECO:0007669"/>
    <property type="project" value="UniProtKB-UniRule"/>
</dbReference>
<dbReference type="CDD" id="cd03242">
    <property type="entry name" value="ABC_RecF"/>
    <property type="match status" value="1"/>
</dbReference>
<dbReference type="Gene3D" id="3.40.50.300">
    <property type="entry name" value="P-loop containing nucleotide triphosphate hydrolases"/>
    <property type="match status" value="1"/>
</dbReference>
<dbReference type="Gene3D" id="1.20.1050.90">
    <property type="entry name" value="RecF/RecN/SMC, N-terminal domain"/>
    <property type="match status" value="1"/>
</dbReference>
<dbReference type="HAMAP" id="MF_00365">
    <property type="entry name" value="RecF"/>
    <property type="match status" value="1"/>
</dbReference>
<dbReference type="InterPro" id="IPR001238">
    <property type="entry name" value="DNA-binding_RecF"/>
</dbReference>
<dbReference type="InterPro" id="IPR018078">
    <property type="entry name" value="DNA-binding_RecF_CS"/>
</dbReference>
<dbReference type="InterPro" id="IPR027417">
    <property type="entry name" value="P-loop_NTPase"/>
</dbReference>
<dbReference type="InterPro" id="IPR003395">
    <property type="entry name" value="RecF/RecN/SMC_N"/>
</dbReference>
<dbReference type="InterPro" id="IPR042174">
    <property type="entry name" value="RecF_2"/>
</dbReference>
<dbReference type="NCBIfam" id="TIGR00611">
    <property type="entry name" value="recf"/>
    <property type="match status" value="1"/>
</dbReference>
<dbReference type="PANTHER" id="PTHR32182">
    <property type="entry name" value="DNA REPLICATION AND REPAIR PROTEIN RECF"/>
    <property type="match status" value="1"/>
</dbReference>
<dbReference type="PANTHER" id="PTHR32182:SF0">
    <property type="entry name" value="DNA REPLICATION AND REPAIR PROTEIN RECF"/>
    <property type="match status" value="1"/>
</dbReference>
<dbReference type="Pfam" id="PF02463">
    <property type="entry name" value="SMC_N"/>
    <property type="match status" value="1"/>
</dbReference>
<dbReference type="SUPFAM" id="SSF52540">
    <property type="entry name" value="P-loop containing nucleoside triphosphate hydrolases"/>
    <property type="match status" value="1"/>
</dbReference>
<dbReference type="PROSITE" id="PS00617">
    <property type="entry name" value="RECF_1"/>
    <property type="match status" value="1"/>
</dbReference>
<dbReference type="PROSITE" id="PS00618">
    <property type="entry name" value="RECF_2"/>
    <property type="match status" value="1"/>
</dbReference>
<proteinExistence type="inferred from homology"/>